<accession>Q2YEM8</accession>
<dbReference type="EC" id="2.3.2.27"/>
<dbReference type="EMBL" id="AY899907">
    <property type="protein sequence ID" value="AAX86685.1"/>
    <property type="molecule type" value="Genomic_DNA"/>
</dbReference>
<dbReference type="EMBL" id="AY899901">
    <property type="protein sequence ID" value="AAX86685.1"/>
    <property type="status" value="JOINED"/>
    <property type="molecule type" value="Genomic_DNA"/>
</dbReference>
<dbReference type="EMBL" id="AY899902">
    <property type="protein sequence ID" value="AAX86685.1"/>
    <property type="status" value="JOINED"/>
    <property type="molecule type" value="Genomic_DNA"/>
</dbReference>
<dbReference type="EMBL" id="AY899903">
    <property type="protein sequence ID" value="AAX86685.1"/>
    <property type="status" value="JOINED"/>
    <property type="molecule type" value="Genomic_DNA"/>
</dbReference>
<dbReference type="EMBL" id="AY899904">
    <property type="protein sequence ID" value="AAX86685.1"/>
    <property type="status" value="JOINED"/>
    <property type="molecule type" value="Genomic_DNA"/>
</dbReference>
<dbReference type="EMBL" id="AY899905">
    <property type="protein sequence ID" value="AAX86685.1"/>
    <property type="status" value="JOINED"/>
    <property type="molecule type" value="Genomic_DNA"/>
</dbReference>
<dbReference type="EMBL" id="AY899906">
    <property type="protein sequence ID" value="AAX86685.1"/>
    <property type="status" value="JOINED"/>
    <property type="molecule type" value="Genomic_DNA"/>
</dbReference>
<dbReference type="SMR" id="Q2YEM8"/>
<dbReference type="UniPathway" id="UPA00143"/>
<dbReference type="GO" id="GO:0005634">
    <property type="term" value="C:nucleus"/>
    <property type="evidence" value="ECO:0007669"/>
    <property type="project" value="UniProtKB-SubCell"/>
</dbReference>
<dbReference type="GO" id="GO:0000932">
    <property type="term" value="C:P-body"/>
    <property type="evidence" value="ECO:0000250"/>
    <property type="project" value="UniProtKB"/>
</dbReference>
<dbReference type="GO" id="GO:0038187">
    <property type="term" value="F:pattern recognition receptor activity"/>
    <property type="evidence" value="ECO:0000250"/>
    <property type="project" value="UniProtKB"/>
</dbReference>
<dbReference type="GO" id="GO:0004842">
    <property type="term" value="F:ubiquitin-protein transferase activity"/>
    <property type="evidence" value="ECO:0000250"/>
    <property type="project" value="UniProtKB"/>
</dbReference>
<dbReference type="GO" id="GO:0008270">
    <property type="term" value="F:zinc ion binding"/>
    <property type="evidence" value="ECO:0007669"/>
    <property type="project" value="UniProtKB-KW"/>
</dbReference>
<dbReference type="GO" id="GO:0002218">
    <property type="term" value="P:activation of innate immune response"/>
    <property type="evidence" value="ECO:0000250"/>
    <property type="project" value="UniProtKB"/>
</dbReference>
<dbReference type="GO" id="GO:0006914">
    <property type="term" value="P:autophagy"/>
    <property type="evidence" value="ECO:0007669"/>
    <property type="project" value="UniProtKB-KW"/>
</dbReference>
<dbReference type="GO" id="GO:0051607">
    <property type="term" value="P:defense response to virus"/>
    <property type="evidence" value="ECO:0007669"/>
    <property type="project" value="UniProtKB-KW"/>
</dbReference>
<dbReference type="GO" id="GO:0045087">
    <property type="term" value="P:innate immune response"/>
    <property type="evidence" value="ECO:0007669"/>
    <property type="project" value="UniProtKB-KW"/>
</dbReference>
<dbReference type="GO" id="GO:0043123">
    <property type="term" value="P:positive regulation of canonical NF-kappaB signal transduction"/>
    <property type="evidence" value="ECO:0000250"/>
    <property type="project" value="UniProtKB"/>
</dbReference>
<dbReference type="GO" id="GO:0043410">
    <property type="term" value="P:positive regulation of MAPK cascade"/>
    <property type="evidence" value="ECO:0000250"/>
    <property type="project" value="UniProtKB"/>
</dbReference>
<dbReference type="GO" id="GO:0051092">
    <property type="term" value="P:positive regulation of NF-kappaB transcription factor activity"/>
    <property type="evidence" value="ECO:0000250"/>
    <property type="project" value="UniProtKB"/>
</dbReference>
<dbReference type="GO" id="GO:0070534">
    <property type="term" value="P:protein K63-linked ubiquitination"/>
    <property type="evidence" value="ECO:0000250"/>
    <property type="project" value="UniProtKB"/>
</dbReference>
<dbReference type="GO" id="GO:0031664">
    <property type="term" value="P:regulation of lipopolysaccharide-mediated signaling pathway"/>
    <property type="evidence" value="ECO:0000250"/>
    <property type="project" value="UniProtKB"/>
</dbReference>
<dbReference type="CDD" id="cd19761">
    <property type="entry name" value="Bbox2_TRIM5-like"/>
    <property type="match status" value="1"/>
</dbReference>
<dbReference type="CDD" id="cd16591">
    <property type="entry name" value="RING-HC_TRIM5-like_C-IV"/>
    <property type="match status" value="1"/>
</dbReference>
<dbReference type="CDD" id="cd15822">
    <property type="entry name" value="SPRY_PRY_TRIM5"/>
    <property type="match status" value="1"/>
</dbReference>
<dbReference type="FunFam" id="2.60.120.920:FF:000023">
    <property type="entry name" value="Tripartite motif-containing 5 (Predicted)"/>
    <property type="match status" value="1"/>
</dbReference>
<dbReference type="FunFam" id="3.30.160.60:FF:000386">
    <property type="entry name" value="Tripartite motif-containing 5 (Predicted)"/>
    <property type="match status" value="1"/>
</dbReference>
<dbReference type="FunFam" id="3.30.40.10:FF:000144">
    <property type="entry name" value="Tripartite motif-containing 5 (Predicted)"/>
    <property type="match status" value="1"/>
</dbReference>
<dbReference type="Gene3D" id="2.60.120.920">
    <property type="match status" value="1"/>
</dbReference>
<dbReference type="Gene3D" id="3.30.160.60">
    <property type="entry name" value="Classic Zinc Finger"/>
    <property type="match status" value="1"/>
</dbReference>
<dbReference type="Gene3D" id="3.30.40.10">
    <property type="entry name" value="Zinc/RING finger domain, C3HC4 (zinc finger)"/>
    <property type="match status" value="1"/>
</dbReference>
<dbReference type="InterPro" id="IPR001870">
    <property type="entry name" value="B30.2/SPRY"/>
</dbReference>
<dbReference type="InterPro" id="IPR043136">
    <property type="entry name" value="B30.2/SPRY_sf"/>
</dbReference>
<dbReference type="InterPro" id="IPR003879">
    <property type="entry name" value="Butyrophylin_SPRY"/>
</dbReference>
<dbReference type="InterPro" id="IPR013320">
    <property type="entry name" value="ConA-like_dom_sf"/>
</dbReference>
<dbReference type="InterPro" id="IPR003877">
    <property type="entry name" value="SPRY_dom"/>
</dbReference>
<dbReference type="InterPro" id="IPR050143">
    <property type="entry name" value="TRIM/RBCC"/>
</dbReference>
<dbReference type="InterPro" id="IPR027370">
    <property type="entry name" value="Znf-RING_euk"/>
</dbReference>
<dbReference type="InterPro" id="IPR000315">
    <property type="entry name" value="Znf_B-box"/>
</dbReference>
<dbReference type="InterPro" id="IPR001841">
    <property type="entry name" value="Znf_RING"/>
</dbReference>
<dbReference type="InterPro" id="IPR013083">
    <property type="entry name" value="Znf_RING/FYVE/PHD"/>
</dbReference>
<dbReference type="InterPro" id="IPR017907">
    <property type="entry name" value="Znf_RING_CS"/>
</dbReference>
<dbReference type="PANTHER" id="PTHR24103">
    <property type="entry name" value="E3 UBIQUITIN-PROTEIN LIGASE TRIM"/>
    <property type="match status" value="1"/>
</dbReference>
<dbReference type="Pfam" id="PF00622">
    <property type="entry name" value="SPRY"/>
    <property type="match status" value="1"/>
</dbReference>
<dbReference type="Pfam" id="PF00643">
    <property type="entry name" value="zf-B_box"/>
    <property type="match status" value="1"/>
</dbReference>
<dbReference type="Pfam" id="PF13445">
    <property type="entry name" value="zf-RING_UBOX"/>
    <property type="match status" value="1"/>
</dbReference>
<dbReference type="PRINTS" id="PR01407">
    <property type="entry name" value="BUTYPHLNCDUF"/>
</dbReference>
<dbReference type="SMART" id="SM00336">
    <property type="entry name" value="BBOX"/>
    <property type="match status" value="1"/>
</dbReference>
<dbReference type="SMART" id="SM00184">
    <property type="entry name" value="RING"/>
    <property type="match status" value="1"/>
</dbReference>
<dbReference type="SMART" id="SM00449">
    <property type="entry name" value="SPRY"/>
    <property type="match status" value="1"/>
</dbReference>
<dbReference type="SUPFAM" id="SSF57845">
    <property type="entry name" value="B-box zinc-binding domain"/>
    <property type="match status" value="1"/>
</dbReference>
<dbReference type="SUPFAM" id="SSF49899">
    <property type="entry name" value="Concanavalin A-like lectins/glucanases"/>
    <property type="match status" value="1"/>
</dbReference>
<dbReference type="SUPFAM" id="SSF57850">
    <property type="entry name" value="RING/U-box"/>
    <property type="match status" value="1"/>
</dbReference>
<dbReference type="PROSITE" id="PS50188">
    <property type="entry name" value="B302_SPRY"/>
    <property type="match status" value="1"/>
</dbReference>
<dbReference type="PROSITE" id="PS50119">
    <property type="entry name" value="ZF_BBOX"/>
    <property type="match status" value="1"/>
</dbReference>
<dbReference type="PROSITE" id="PS00518">
    <property type="entry name" value="ZF_RING_1"/>
    <property type="match status" value="1"/>
</dbReference>
<dbReference type="PROSITE" id="PS50089">
    <property type="entry name" value="ZF_RING_2"/>
    <property type="match status" value="1"/>
</dbReference>
<gene>
    <name type="primary">TRIM5</name>
</gene>
<protein>
    <recommendedName>
        <fullName>Tripartite motif-containing protein 5</fullName>
        <ecNumber>2.3.2.27</ecNumber>
    </recommendedName>
    <alternativeName>
        <fullName evidence="8">RING-type E3 ubiquitin transferase TRIM5</fullName>
    </alternativeName>
    <alternativeName>
        <fullName>TRIM5alpha</fullName>
    </alternativeName>
</protein>
<keyword id="KW-0007">Acetylation</keyword>
<keyword id="KW-0051">Antiviral defense</keyword>
<keyword id="KW-0072">Autophagy</keyword>
<keyword id="KW-0175">Coiled coil</keyword>
<keyword id="KW-0963">Cytoplasm</keyword>
<keyword id="KW-0391">Immunity</keyword>
<keyword id="KW-0399">Innate immunity</keyword>
<keyword id="KW-0479">Metal-binding</keyword>
<keyword id="KW-0539">Nucleus</keyword>
<keyword id="KW-0597">Phosphoprotein</keyword>
<keyword id="KW-0808">Transferase</keyword>
<keyword id="KW-0832">Ubl conjugation</keyword>
<keyword id="KW-0833">Ubl conjugation pathway</keyword>
<keyword id="KW-0862">Zinc</keyword>
<keyword id="KW-0863">Zinc-finger</keyword>
<organism>
    <name type="scientific">Hoolock hoolock</name>
    <name type="common">Western hoolock gibbon</name>
    <name type="synonym">Bunopithecus hoolock</name>
    <dbReference type="NCBI Taxonomy" id="61851"/>
    <lineage>
        <taxon>Eukaryota</taxon>
        <taxon>Metazoa</taxon>
        <taxon>Chordata</taxon>
        <taxon>Craniata</taxon>
        <taxon>Vertebrata</taxon>
        <taxon>Euteleostomi</taxon>
        <taxon>Mammalia</taxon>
        <taxon>Eutheria</taxon>
        <taxon>Euarchontoglires</taxon>
        <taxon>Primates</taxon>
        <taxon>Haplorrhini</taxon>
        <taxon>Catarrhini</taxon>
        <taxon>Hylobatidae</taxon>
        <taxon>Hoolock</taxon>
    </lineage>
</organism>
<proteinExistence type="inferred from homology"/>
<feature type="initiator methionine" description="Removed" evidence="3">
    <location>
        <position position="1"/>
    </location>
</feature>
<feature type="chain" id="PRO_0000273450" description="Tripartite motif-containing protein 5">
    <location>
        <begin position="2"/>
        <end position="494"/>
    </location>
</feature>
<feature type="domain" description="B30.2/SPRY" evidence="7">
    <location>
        <begin position="282"/>
        <end position="494"/>
    </location>
</feature>
<feature type="zinc finger region" description="RING-type" evidence="6">
    <location>
        <begin position="15"/>
        <end position="59"/>
    </location>
</feature>
<feature type="zinc finger region" description="B box-type" evidence="5">
    <location>
        <begin position="91"/>
        <end position="133"/>
    </location>
</feature>
<feature type="region of interest" description="Required for interaction with GABARAP and for autophagy" evidence="2">
    <location>
        <begin position="186"/>
        <end position="199"/>
    </location>
</feature>
<feature type="coiled-coil region" evidence="4">
    <location>
        <begin position="132"/>
        <end position="241"/>
    </location>
</feature>
<feature type="binding site" evidence="5">
    <location>
        <position position="96"/>
    </location>
    <ligand>
        <name>Zn(2+)</name>
        <dbReference type="ChEBI" id="CHEBI:29105"/>
    </ligand>
</feature>
<feature type="binding site" evidence="5">
    <location>
        <position position="99"/>
    </location>
    <ligand>
        <name>Zn(2+)</name>
        <dbReference type="ChEBI" id="CHEBI:29105"/>
    </ligand>
</feature>
<feature type="binding site" evidence="5">
    <location>
        <position position="118"/>
    </location>
    <ligand>
        <name>Zn(2+)</name>
        <dbReference type="ChEBI" id="CHEBI:29105"/>
    </ligand>
</feature>
<feature type="binding site" evidence="5">
    <location>
        <position position="124"/>
    </location>
    <ligand>
        <name>Zn(2+)</name>
        <dbReference type="ChEBI" id="CHEBI:29105"/>
    </ligand>
</feature>
<feature type="modified residue" description="N-acetylalanine" evidence="3">
    <location>
        <position position="2"/>
    </location>
</feature>
<feature type="modified residue" description="Phosphoserine" evidence="3">
    <location>
        <position position="86"/>
    </location>
</feature>
<name>TRIM5_HOOHO</name>
<evidence type="ECO:0000250" key="1"/>
<evidence type="ECO:0000250" key="2">
    <source>
        <dbReference type="UniProtKB" id="Q0PF16"/>
    </source>
</evidence>
<evidence type="ECO:0000250" key="3">
    <source>
        <dbReference type="UniProtKB" id="Q9C035"/>
    </source>
</evidence>
<evidence type="ECO:0000255" key="4"/>
<evidence type="ECO:0000255" key="5">
    <source>
        <dbReference type="PROSITE-ProRule" id="PRU00024"/>
    </source>
</evidence>
<evidence type="ECO:0000255" key="6">
    <source>
        <dbReference type="PROSITE-ProRule" id="PRU00175"/>
    </source>
</evidence>
<evidence type="ECO:0000255" key="7">
    <source>
        <dbReference type="PROSITE-ProRule" id="PRU00548"/>
    </source>
</evidence>
<evidence type="ECO:0000305" key="8"/>
<sequence length="494" mass="56859">MASGILVNVKEEVTCPICLELLTQPLSLDCGHSFCQACLTANHKTSMPDEGERSCPVCRISYQHKNIRPNRHVANIVEKLREVKLSPEEGQKVDHCARHGEKLLLFCREDRKVICWLCERSQEHRGHHTFLTEEVAQEYQMKLQAALQMLRQKQQEAEELEADIREEKASWKTQIQYDKTNILADFEQLRHILDWVESNELQNLEKEKKDVLKRLMKSEIEMVQQTQSVRELISDLEHRLQGSVMELLQGVDGIIKRMKNVTLKKPETFPKNKRRVFRAADLKVMLEVLRELRDVRRYWVDVTVAPNNISYAVISEDMRQVSSPEPQIICEAQGTISQTFVNFNYCTGILGSQSITSGKHYWEVDVSKKSAWILGVCAGLQPDAMYNIEQNENYQPKCGYWVIGLEERVKCNAFQDGSFHTPSAPFIVPLSVNICPDRVGVFLDYEACTVSFFNITDHGFLIYKFSRCSFSQPVFPYLNPRKCTVPMTLCSPSS</sequence>
<reference key="1">
    <citation type="journal article" date="2005" name="Gene">
        <title>Adaptive evolution of primate TRIM5alpha, a gene restricting HIV-1 infection.</title>
        <authorList>
            <person name="Liu H.L."/>
            <person name="Wang Y.Q."/>
            <person name="Liao C.H."/>
            <person name="Kuang Y.Q."/>
            <person name="Zheng Y.T."/>
            <person name="Su B."/>
        </authorList>
    </citation>
    <scope>NUCLEOTIDE SEQUENCE [GENOMIC DNA]</scope>
</reference>
<comment type="function">
    <text evidence="3">Capsid-specific restriction factor that prevents infection from non-host-adapted retroviruses. Blocks viral replication early in the life cycle, after viral entry but before reverse transcription. In addition to acting as a capsid-specific restriction factor, also acts as a pattern recognition receptor that activates innate immune signaling in response to the retroviral capsid lattice. Binding to the viral capsid triggers its E3 ubiquitin ligase activity, and in concert with the heterodimeric ubiquitin conjugating enzyme complex UBE2V1-UBE2N (also known as UBC13-UEV1A complex) generates 'Lys-63'-linked polyubiquitin chains, which in turn are catalysts in the autophosphorylation of the MAP3K7/TAK1 complex (includes TAK1, TAB2, and TAB3). Activation of the MAP3K7/TAK1 complex by autophosphorylation results in the induction and expression of NF-kappa-B and MAPK-responsive inflammatory genes, thereby leading to an innate immune response in the infected cell. Plays a role in regulating autophagy through activation of autophagy regulator BECN1 by causing its dissociation from its inhibitors BCL2 and TAB2.</text>
</comment>
<comment type="catalytic activity">
    <reaction>
        <text>S-ubiquitinyl-[E2 ubiquitin-conjugating enzyme]-L-cysteine + [acceptor protein]-L-lysine = [E2 ubiquitin-conjugating enzyme]-L-cysteine + N(6)-ubiquitinyl-[acceptor protein]-L-lysine.</text>
        <dbReference type="EC" id="2.3.2.27"/>
    </reaction>
</comment>
<comment type="pathway">
    <text>Protein modification; protein ubiquitination.</text>
</comment>
<comment type="subunit">
    <text evidence="2 3">Can form homodimers and homotrimers. In addition to lower-order dimerization, also exhibits a higher-order multimerization and both low- and high-order multimerizations are essential for its restriction activity. Interacts with BTBD1 and BTBD2. Interacts with PSMC4, PSMC5, PSMD7 and HSPA8/HSC70. Interacts (via B30.2/SPRY domain) with HSPA1A/B. Interacts with PSMC2, MAP3K7/TAK1, TAB2 and TAB3. Interacts with SQSTM1. Interacts with TRIM6 and TRIM34. Interacts with ULK1 (phosphorylated form), GABARAP, GABARAPL1, GABARAPL2, MAP1LC3A, MAP1LC3C and BECN1.</text>
</comment>
<comment type="subcellular location">
    <subcellularLocation>
        <location evidence="2">Cytoplasm</location>
    </subcellularLocation>
    <subcellularLocation>
        <location evidence="2">Nucleus</location>
    </subcellularLocation>
    <text evidence="2">Predominantly localizes in cytoplasmic bodies. Localization may be influenced by the coexpression of other TRIM proteins, hence partial nuclear localization is observed in the presence of TRIM22 or TRIM27. In cytoplasmic bodies, colocalizes with proteasomal subunits and SQSTM1.</text>
</comment>
<comment type="domain">
    <text evidence="2 3">The B box-type zinc finger domain and the coiled-coil domain contribute to the higher and low order multimerization respectively which is essential for restriction activity. The coiled coil domain is important for higher order multimerization by promoting the initial dimerization.</text>
</comment>
<comment type="domain">
    <text evidence="1">The B30.2/SPRY domain acts as a capsid recognition domain. Polymorphisms in this domain explain the observed species-specific differences among orthologs (By similarity).</text>
</comment>
<comment type="domain">
    <text evidence="1">The RING-type zinc finger domain confers E3 ubiquitin ligase activity and is essential for retrovirus restriction activity, autoubiquitination and higher-order multimerization.</text>
</comment>
<comment type="PTM">
    <text evidence="1">Degraded in a proteasome-independent fashion in the absence of viral infection but in a proteasome-dependent fashion following exposure to restriction sensitive virus.</text>
</comment>
<comment type="PTM">
    <text evidence="1">Autoubiquitinated in a RING finger- and UBE2D2-dependent manner. Monoubiquitinated by TRIM21. Deubiquitinated by Yersinia YopJ. Ubiquitination may not lead to proteasomal degradation (By similarity).</text>
</comment>
<comment type="similarity">
    <text evidence="8">Belongs to the TRIM/RBCC family.</text>
</comment>